<name>NHAA_SULNB</name>
<comment type="function">
    <text evidence="1">Na(+)/H(+) antiporter that extrudes sodium in exchange for external protons.</text>
</comment>
<comment type="catalytic activity">
    <reaction evidence="1">
        <text>Na(+)(in) + 2 H(+)(out) = Na(+)(out) + 2 H(+)(in)</text>
        <dbReference type="Rhea" id="RHEA:29251"/>
        <dbReference type="ChEBI" id="CHEBI:15378"/>
        <dbReference type="ChEBI" id="CHEBI:29101"/>
    </reaction>
    <physiologicalReaction direction="left-to-right" evidence="1">
        <dbReference type="Rhea" id="RHEA:29252"/>
    </physiologicalReaction>
</comment>
<comment type="subcellular location">
    <subcellularLocation>
        <location evidence="1">Cell inner membrane</location>
        <topology evidence="1">Multi-pass membrane protein</topology>
    </subcellularLocation>
</comment>
<comment type="similarity">
    <text evidence="1">Belongs to the NhaA Na(+)/H(+) (TC 2.A.33) antiporter family.</text>
</comment>
<protein>
    <recommendedName>
        <fullName evidence="1">Na(+)/H(+) antiporter NhaA</fullName>
    </recommendedName>
    <alternativeName>
        <fullName evidence="1">Sodium/proton antiporter NhaA</fullName>
    </alternativeName>
</protein>
<accession>A6Q6G8</accession>
<proteinExistence type="inferred from homology"/>
<organism>
    <name type="scientific">Sulfurovum sp. (strain NBC37-1)</name>
    <dbReference type="NCBI Taxonomy" id="387093"/>
    <lineage>
        <taxon>Bacteria</taxon>
        <taxon>Pseudomonadati</taxon>
        <taxon>Campylobacterota</taxon>
        <taxon>Epsilonproteobacteria</taxon>
        <taxon>Campylobacterales</taxon>
        <taxon>Sulfurovaceae</taxon>
        <taxon>Sulfurovum</taxon>
    </lineage>
</organism>
<reference key="1">
    <citation type="journal article" date="2007" name="Proc. Natl. Acad. Sci. U.S.A.">
        <title>Deep-sea vent epsilon-proteobacterial genomes provide insights into emergence of pathogens.</title>
        <authorList>
            <person name="Nakagawa S."/>
            <person name="Takaki Y."/>
            <person name="Shimamura S."/>
            <person name="Reysenbach A.-L."/>
            <person name="Takai K."/>
            <person name="Horikoshi K."/>
        </authorList>
    </citation>
    <scope>NUCLEOTIDE SEQUENCE [LARGE SCALE GENOMIC DNA]</scope>
    <source>
        <strain>NBC37-1</strain>
    </source>
</reference>
<keyword id="KW-0050">Antiport</keyword>
<keyword id="KW-0997">Cell inner membrane</keyword>
<keyword id="KW-1003">Cell membrane</keyword>
<keyword id="KW-0406">Ion transport</keyword>
<keyword id="KW-0472">Membrane</keyword>
<keyword id="KW-0915">Sodium</keyword>
<keyword id="KW-0739">Sodium transport</keyword>
<keyword id="KW-0812">Transmembrane</keyword>
<keyword id="KW-1133">Transmembrane helix</keyword>
<keyword id="KW-0813">Transport</keyword>
<feature type="chain" id="PRO_0000334450" description="Na(+)/H(+) antiporter NhaA">
    <location>
        <begin position="1"/>
        <end position="392"/>
    </location>
</feature>
<feature type="transmembrane region" description="Helical" evidence="1">
    <location>
        <begin position="16"/>
        <end position="36"/>
    </location>
</feature>
<feature type="transmembrane region" description="Helical" evidence="1">
    <location>
        <begin position="58"/>
        <end position="78"/>
    </location>
</feature>
<feature type="transmembrane region" description="Helical" evidence="1">
    <location>
        <begin position="93"/>
        <end position="113"/>
    </location>
</feature>
<feature type="transmembrane region" description="Helical" evidence="1">
    <location>
        <begin position="124"/>
        <end position="144"/>
    </location>
</feature>
<feature type="transmembrane region" description="Helical" evidence="1">
    <location>
        <begin position="153"/>
        <end position="173"/>
    </location>
</feature>
<feature type="transmembrane region" description="Helical" evidence="1">
    <location>
        <begin position="176"/>
        <end position="196"/>
    </location>
</feature>
<feature type="transmembrane region" description="Helical" evidence="1">
    <location>
        <begin position="199"/>
        <end position="219"/>
    </location>
</feature>
<feature type="transmembrane region" description="Helical" evidence="1">
    <location>
        <begin position="257"/>
        <end position="277"/>
    </location>
</feature>
<feature type="transmembrane region" description="Helical" evidence="1">
    <location>
        <begin position="295"/>
        <end position="315"/>
    </location>
</feature>
<feature type="transmembrane region" description="Helical" evidence="1">
    <location>
        <begin position="328"/>
        <end position="348"/>
    </location>
</feature>
<feature type="transmembrane region" description="Helical" evidence="1">
    <location>
        <begin position="362"/>
        <end position="382"/>
    </location>
</feature>
<sequence>MDTITSFLKKESSAGILLIIVTVLALILQNSFLSAAYTSFLHTPVEIRFGALHIAKPLLLWVNDGLMAIFFFLIGLEVKREVMEGHLSSLKQITLPGIAAVGGMIVPALIFILFNKGESFAMNGWAIPTATDIAFALGILSLLGPRVPLSLKIFLMALSIIDDLGAIVIIALFYTTDLSTLSITVAAISLAILFIMNRMDVAIKSAYIVIGIILWVSVLKSGVHATLAGVALAFMIPMESKNKKGNRFSMAKEMEHDLHYWVAFLILPLFAFVNAGVDLKGISLEAMSGPVPLGVMLGLFVGKQAGVFGFSWLAIKMGMASLPKESSWMMLYGVSVLTGIGFTMSLFVDSLAYDDTQIYHYADKLAILLGSFLSAATGYLILRMQKNKNVES</sequence>
<dbReference type="EMBL" id="AP009179">
    <property type="protein sequence ID" value="BAF71077.1"/>
    <property type="molecule type" value="Genomic_DNA"/>
</dbReference>
<dbReference type="RefSeq" id="WP_011979810.1">
    <property type="nucleotide sequence ID" value="NC_009663.1"/>
</dbReference>
<dbReference type="SMR" id="A6Q6G8"/>
<dbReference type="STRING" id="387093.SUN_0117"/>
<dbReference type="KEGG" id="sun:SUN_0117"/>
<dbReference type="eggNOG" id="COG3004">
    <property type="taxonomic scope" value="Bacteria"/>
</dbReference>
<dbReference type="HOGENOM" id="CLU_015803_1_0_7"/>
<dbReference type="OrthoDB" id="9808135at2"/>
<dbReference type="Proteomes" id="UP000006378">
    <property type="component" value="Chromosome"/>
</dbReference>
<dbReference type="GO" id="GO:0005886">
    <property type="term" value="C:plasma membrane"/>
    <property type="evidence" value="ECO:0007669"/>
    <property type="project" value="UniProtKB-SubCell"/>
</dbReference>
<dbReference type="GO" id="GO:0015385">
    <property type="term" value="F:sodium:proton antiporter activity"/>
    <property type="evidence" value="ECO:0007669"/>
    <property type="project" value="TreeGrafter"/>
</dbReference>
<dbReference type="GO" id="GO:0006885">
    <property type="term" value="P:regulation of pH"/>
    <property type="evidence" value="ECO:0007669"/>
    <property type="project" value="InterPro"/>
</dbReference>
<dbReference type="Gene3D" id="1.20.1530.10">
    <property type="entry name" value="Na+/H+ antiporter like domain"/>
    <property type="match status" value="1"/>
</dbReference>
<dbReference type="HAMAP" id="MF_01844">
    <property type="entry name" value="NhaA"/>
    <property type="match status" value="1"/>
</dbReference>
<dbReference type="InterPro" id="IPR023171">
    <property type="entry name" value="Na/H_antiporter_dom_sf"/>
</dbReference>
<dbReference type="InterPro" id="IPR004670">
    <property type="entry name" value="NhaA"/>
</dbReference>
<dbReference type="NCBIfam" id="TIGR00773">
    <property type="entry name" value="NhaA"/>
    <property type="match status" value="1"/>
</dbReference>
<dbReference type="NCBIfam" id="NF007111">
    <property type="entry name" value="PRK09560.1"/>
    <property type="match status" value="1"/>
</dbReference>
<dbReference type="NCBIfam" id="NF007112">
    <property type="entry name" value="PRK09561.1"/>
    <property type="match status" value="1"/>
</dbReference>
<dbReference type="PANTHER" id="PTHR30341:SF0">
    <property type="entry name" value="NA(+)_H(+) ANTIPORTER NHAA"/>
    <property type="match status" value="1"/>
</dbReference>
<dbReference type="PANTHER" id="PTHR30341">
    <property type="entry name" value="SODIUM ION/PROTON ANTIPORTER NHAA-RELATED"/>
    <property type="match status" value="1"/>
</dbReference>
<dbReference type="Pfam" id="PF06965">
    <property type="entry name" value="Na_H_antiport_1"/>
    <property type="match status" value="1"/>
</dbReference>
<gene>
    <name evidence="1" type="primary">nhaA</name>
    <name type="ordered locus">SUN_0117</name>
</gene>
<evidence type="ECO:0000255" key="1">
    <source>
        <dbReference type="HAMAP-Rule" id="MF_01844"/>
    </source>
</evidence>